<protein>
    <recommendedName>
        <fullName evidence="1">UDP-N-acetylglucosamine--N-acetylmuramyl-(pentapeptide) pyrophosphoryl-undecaprenol N-acetylglucosamine transferase</fullName>
        <ecNumber evidence="1">2.4.1.227</ecNumber>
    </recommendedName>
    <alternativeName>
        <fullName evidence="1">Undecaprenyl-PP-MurNAc-pentapeptide-UDPGlcNAc GlcNAc transferase</fullName>
    </alternativeName>
</protein>
<evidence type="ECO:0000255" key="1">
    <source>
        <dbReference type="HAMAP-Rule" id="MF_00033"/>
    </source>
</evidence>
<keyword id="KW-0131">Cell cycle</keyword>
<keyword id="KW-0132">Cell division</keyword>
<keyword id="KW-0997">Cell inner membrane</keyword>
<keyword id="KW-1003">Cell membrane</keyword>
<keyword id="KW-0133">Cell shape</keyword>
<keyword id="KW-0961">Cell wall biogenesis/degradation</keyword>
<keyword id="KW-0328">Glycosyltransferase</keyword>
<keyword id="KW-0472">Membrane</keyword>
<keyword id="KW-0573">Peptidoglycan synthesis</keyword>
<keyword id="KW-1185">Reference proteome</keyword>
<keyword id="KW-0808">Transferase</keyword>
<reference key="1">
    <citation type="journal article" date="2004" name="Nature">
        <title>Genome sequence of Silicibacter pomeroyi reveals adaptations to the marine environment.</title>
        <authorList>
            <person name="Moran M.A."/>
            <person name="Buchan A."/>
            <person name="Gonzalez J.M."/>
            <person name="Heidelberg J.F."/>
            <person name="Whitman W.B."/>
            <person name="Kiene R.P."/>
            <person name="Henriksen J.R."/>
            <person name="King G.M."/>
            <person name="Belas R."/>
            <person name="Fuqua C."/>
            <person name="Brinkac L.M."/>
            <person name="Lewis M."/>
            <person name="Johri S."/>
            <person name="Weaver B."/>
            <person name="Pai G."/>
            <person name="Eisen J.A."/>
            <person name="Rahe E."/>
            <person name="Sheldon W.M."/>
            <person name="Ye W."/>
            <person name="Miller T.R."/>
            <person name="Carlton J."/>
            <person name="Rasko D.A."/>
            <person name="Paulsen I.T."/>
            <person name="Ren Q."/>
            <person name="Daugherty S.C."/>
            <person name="DeBoy R.T."/>
            <person name="Dodson R.J."/>
            <person name="Durkin A.S."/>
            <person name="Madupu R."/>
            <person name="Nelson W.C."/>
            <person name="Sullivan S.A."/>
            <person name="Rosovitz M.J."/>
            <person name="Haft D.H."/>
            <person name="Selengut J."/>
            <person name="Ward N."/>
        </authorList>
    </citation>
    <scope>NUCLEOTIDE SEQUENCE [LARGE SCALE GENOMIC DNA]</scope>
    <source>
        <strain>ATCC 700808 / DSM 15171 / DSS-3</strain>
    </source>
</reference>
<reference key="2">
    <citation type="journal article" date="2014" name="Stand. Genomic Sci.">
        <title>An updated genome annotation for the model marine bacterium Ruegeria pomeroyi DSS-3.</title>
        <authorList>
            <person name="Rivers A.R."/>
            <person name="Smith C.B."/>
            <person name="Moran M.A."/>
        </authorList>
    </citation>
    <scope>GENOME REANNOTATION</scope>
    <source>
        <strain>ATCC 700808 / DSM 15171 / DSS-3</strain>
    </source>
</reference>
<dbReference type="EC" id="2.4.1.227" evidence="1"/>
<dbReference type="EMBL" id="CP000031">
    <property type="protein sequence ID" value="AAV94491.1"/>
    <property type="molecule type" value="Genomic_DNA"/>
</dbReference>
<dbReference type="RefSeq" id="WP_011046938.1">
    <property type="nucleotide sequence ID" value="NC_003911.12"/>
</dbReference>
<dbReference type="SMR" id="Q5LU63"/>
<dbReference type="STRING" id="246200.SPO1195"/>
<dbReference type="CAZy" id="GT28">
    <property type="family name" value="Glycosyltransferase Family 28"/>
</dbReference>
<dbReference type="PaxDb" id="246200-SPO1195"/>
<dbReference type="KEGG" id="sil:SPO1195"/>
<dbReference type="eggNOG" id="COG0707">
    <property type="taxonomic scope" value="Bacteria"/>
</dbReference>
<dbReference type="HOGENOM" id="CLU_037404_2_1_5"/>
<dbReference type="OrthoDB" id="9808936at2"/>
<dbReference type="UniPathway" id="UPA00219"/>
<dbReference type="Proteomes" id="UP000001023">
    <property type="component" value="Chromosome"/>
</dbReference>
<dbReference type="GO" id="GO:0005886">
    <property type="term" value="C:plasma membrane"/>
    <property type="evidence" value="ECO:0007669"/>
    <property type="project" value="UniProtKB-SubCell"/>
</dbReference>
<dbReference type="GO" id="GO:0051991">
    <property type="term" value="F:UDP-N-acetyl-D-glucosamine:N-acetylmuramoyl-L-alanyl-D-glutamyl-meso-2,6-diaminopimelyl-D-alanyl-D-alanine-diphosphoundecaprenol 4-beta-N-acetylglucosaminlytransferase activity"/>
    <property type="evidence" value="ECO:0007669"/>
    <property type="project" value="RHEA"/>
</dbReference>
<dbReference type="GO" id="GO:0050511">
    <property type="term" value="F:undecaprenyldiphospho-muramoylpentapeptide beta-N-acetylglucosaminyltransferase activity"/>
    <property type="evidence" value="ECO:0007669"/>
    <property type="project" value="UniProtKB-UniRule"/>
</dbReference>
<dbReference type="GO" id="GO:0005975">
    <property type="term" value="P:carbohydrate metabolic process"/>
    <property type="evidence" value="ECO:0007669"/>
    <property type="project" value="InterPro"/>
</dbReference>
<dbReference type="GO" id="GO:0051301">
    <property type="term" value="P:cell division"/>
    <property type="evidence" value="ECO:0007669"/>
    <property type="project" value="UniProtKB-KW"/>
</dbReference>
<dbReference type="GO" id="GO:0071555">
    <property type="term" value="P:cell wall organization"/>
    <property type="evidence" value="ECO:0007669"/>
    <property type="project" value="UniProtKB-KW"/>
</dbReference>
<dbReference type="GO" id="GO:0030259">
    <property type="term" value="P:lipid glycosylation"/>
    <property type="evidence" value="ECO:0007669"/>
    <property type="project" value="UniProtKB-UniRule"/>
</dbReference>
<dbReference type="GO" id="GO:0009252">
    <property type="term" value="P:peptidoglycan biosynthetic process"/>
    <property type="evidence" value="ECO:0007669"/>
    <property type="project" value="UniProtKB-UniRule"/>
</dbReference>
<dbReference type="GO" id="GO:0008360">
    <property type="term" value="P:regulation of cell shape"/>
    <property type="evidence" value="ECO:0007669"/>
    <property type="project" value="UniProtKB-KW"/>
</dbReference>
<dbReference type="CDD" id="cd03785">
    <property type="entry name" value="GT28_MurG"/>
    <property type="match status" value="1"/>
</dbReference>
<dbReference type="Gene3D" id="3.40.50.2000">
    <property type="entry name" value="Glycogen Phosphorylase B"/>
    <property type="match status" value="2"/>
</dbReference>
<dbReference type="HAMAP" id="MF_00033">
    <property type="entry name" value="MurG"/>
    <property type="match status" value="1"/>
</dbReference>
<dbReference type="InterPro" id="IPR006009">
    <property type="entry name" value="GlcNAc_MurG"/>
</dbReference>
<dbReference type="InterPro" id="IPR007235">
    <property type="entry name" value="Glyco_trans_28_C"/>
</dbReference>
<dbReference type="InterPro" id="IPR004276">
    <property type="entry name" value="GlycoTrans_28_N"/>
</dbReference>
<dbReference type="PANTHER" id="PTHR21015:SF22">
    <property type="entry name" value="GLYCOSYLTRANSFERASE"/>
    <property type="match status" value="1"/>
</dbReference>
<dbReference type="PANTHER" id="PTHR21015">
    <property type="entry name" value="UDP-N-ACETYLGLUCOSAMINE--N-ACETYLMURAMYL-(PENTAPEPTIDE) PYROPHOSPHORYL-UNDECAPRENOL N-ACETYLGLUCOSAMINE TRANSFERASE 1"/>
    <property type="match status" value="1"/>
</dbReference>
<dbReference type="Pfam" id="PF04101">
    <property type="entry name" value="Glyco_tran_28_C"/>
    <property type="match status" value="1"/>
</dbReference>
<dbReference type="Pfam" id="PF03033">
    <property type="entry name" value="Glyco_transf_28"/>
    <property type="match status" value="1"/>
</dbReference>
<dbReference type="SUPFAM" id="SSF53756">
    <property type="entry name" value="UDP-Glycosyltransferase/glycogen phosphorylase"/>
    <property type="match status" value="1"/>
</dbReference>
<gene>
    <name evidence="1" type="primary">murG</name>
    <name type="ordered locus">SPO1195</name>
</gene>
<feature type="chain" id="PRO_0000225097" description="UDP-N-acetylglucosamine--N-acetylmuramyl-(pentapeptide) pyrophosphoryl-undecaprenol N-acetylglucosamine transferase">
    <location>
        <begin position="1"/>
        <end position="365"/>
    </location>
</feature>
<feature type="binding site" evidence="1">
    <location>
        <begin position="13"/>
        <end position="15"/>
    </location>
    <ligand>
        <name>UDP-N-acetyl-alpha-D-glucosamine</name>
        <dbReference type="ChEBI" id="CHEBI:57705"/>
    </ligand>
</feature>
<feature type="binding site" evidence="1">
    <location>
        <position position="125"/>
    </location>
    <ligand>
        <name>UDP-N-acetyl-alpha-D-glucosamine</name>
        <dbReference type="ChEBI" id="CHEBI:57705"/>
    </ligand>
</feature>
<feature type="binding site" evidence="1">
    <location>
        <position position="165"/>
    </location>
    <ligand>
        <name>UDP-N-acetyl-alpha-D-glucosamine</name>
        <dbReference type="ChEBI" id="CHEBI:57705"/>
    </ligand>
</feature>
<feature type="binding site" evidence="1">
    <location>
        <position position="192"/>
    </location>
    <ligand>
        <name>UDP-N-acetyl-alpha-D-glucosamine</name>
        <dbReference type="ChEBI" id="CHEBI:57705"/>
    </ligand>
</feature>
<feature type="binding site" evidence="1">
    <location>
        <position position="293"/>
    </location>
    <ligand>
        <name>UDP-N-acetyl-alpha-D-glucosamine</name>
        <dbReference type="ChEBI" id="CHEBI:57705"/>
    </ligand>
</feature>
<name>MURG_RUEPO</name>
<sequence length="365" mass="38276">MTRKYLMIAAGGTGGHMFPAQALAEAMLRKGWRVRLSTDARGARYTGGFPHTTEISQVSSATFARGGILAKAMVAPRIAAGIAATAWEMRRDRPDVVVGFGGYPSIPALGAATLLRLPRMIHEQNGVLGRVNQLFARRVACVACGVWPTDLPEGAQGVHVGNPVRAAVLERAGAAYIPPGPYPMSILVMGGSQGARILSDVVPGAIAALPEELRQYIRVAHQARDEDGARVTEFYAAHGIDAEVQPFFHDVPRRMSEAQLVISRAGASSVADISVIGRPSILIPFAAATGDHQTANARALTGANAAILIPERALDSAALAEQIAAVLTHPDAALQMANAALSTGAPDATERLVGLVEQLAEKETP</sequence>
<proteinExistence type="inferred from homology"/>
<comment type="function">
    <text evidence="1">Cell wall formation. Catalyzes the transfer of a GlcNAc subunit on undecaprenyl-pyrophosphoryl-MurNAc-pentapeptide (lipid intermediate I) to form undecaprenyl-pyrophosphoryl-MurNAc-(pentapeptide)GlcNAc (lipid intermediate II).</text>
</comment>
<comment type="catalytic activity">
    <reaction evidence="1">
        <text>di-trans,octa-cis-undecaprenyl diphospho-N-acetyl-alpha-D-muramoyl-L-alanyl-D-glutamyl-meso-2,6-diaminopimeloyl-D-alanyl-D-alanine + UDP-N-acetyl-alpha-D-glucosamine = di-trans,octa-cis-undecaprenyl diphospho-[N-acetyl-alpha-D-glucosaminyl-(1-&gt;4)]-N-acetyl-alpha-D-muramoyl-L-alanyl-D-glutamyl-meso-2,6-diaminopimeloyl-D-alanyl-D-alanine + UDP + H(+)</text>
        <dbReference type="Rhea" id="RHEA:31227"/>
        <dbReference type="ChEBI" id="CHEBI:15378"/>
        <dbReference type="ChEBI" id="CHEBI:57705"/>
        <dbReference type="ChEBI" id="CHEBI:58223"/>
        <dbReference type="ChEBI" id="CHEBI:61387"/>
        <dbReference type="ChEBI" id="CHEBI:61388"/>
        <dbReference type="EC" id="2.4.1.227"/>
    </reaction>
</comment>
<comment type="pathway">
    <text evidence="1">Cell wall biogenesis; peptidoglycan biosynthesis.</text>
</comment>
<comment type="subcellular location">
    <subcellularLocation>
        <location evidence="1">Cell inner membrane</location>
        <topology evidence="1">Peripheral membrane protein</topology>
        <orientation evidence="1">Cytoplasmic side</orientation>
    </subcellularLocation>
</comment>
<comment type="similarity">
    <text evidence="1">Belongs to the glycosyltransferase 28 family. MurG subfamily.</text>
</comment>
<organism>
    <name type="scientific">Ruegeria pomeroyi (strain ATCC 700808 / DSM 15171 / DSS-3)</name>
    <name type="common">Silicibacter pomeroyi</name>
    <dbReference type="NCBI Taxonomy" id="246200"/>
    <lineage>
        <taxon>Bacteria</taxon>
        <taxon>Pseudomonadati</taxon>
        <taxon>Pseudomonadota</taxon>
        <taxon>Alphaproteobacteria</taxon>
        <taxon>Rhodobacterales</taxon>
        <taxon>Roseobacteraceae</taxon>
        <taxon>Ruegeria</taxon>
    </lineage>
</organism>
<accession>Q5LU63</accession>